<gene>
    <name evidence="2" type="primary">Ras85D</name>
    <name type="ORF">GH19394</name>
</gene>
<comment type="function">
    <text evidence="1 2">Ras proteins bind GDP/GTP and possess intrinsic GTPase activity. Plays a role in eye development by regulating cell growth, survival of postmitotic ommatidial cells and differentiation of photoreceptor cells. During larval development, mediates Ptth/tor signaling leading to the production of ecdysone, a hormone required for the initiation of metamorphosis.</text>
</comment>
<comment type="catalytic activity">
    <reaction evidence="1">
        <text>GTP + H2O = GDP + phosphate + H(+)</text>
        <dbReference type="Rhea" id="RHEA:19669"/>
        <dbReference type="ChEBI" id="CHEBI:15377"/>
        <dbReference type="ChEBI" id="CHEBI:15378"/>
        <dbReference type="ChEBI" id="CHEBI:37565"/>
        <dbReference type="ChEBI" id="CHEBI:43474"/>
        <dbReference type="ChEBI" id="CHEBI:58189"/>
        <dbReference type="EC" id="3.6.5.2"/>
    </reaction>
</comment>
<comment type="activity regulation">
    <text>Alternates between an inactive form bound to GDP and an active form bound to GTP. Activated by a guanine nucleotide-exchange factor (GEF) and inactivated by a GTPase-activating protein (GAP).</text>
</comment>
<comment type="subcellular location">
    <subcellularLocation>
        <location evidence="2">Cell membrane</location>
        <topology evidence="2">Lipid-anchor</topology>
        <orientation evidence="2">Cytoplasmic side</orientation>
    </subcellularLocation>
</comment>
<comment type="similarity">
    <text evidence="3">Belongs to the small GTPase superfamily. Ras family.</text>
</comment>
<feature type="chain" id="PRO_0000363710" description="Ras-like protein 1" evidence="2">
    <location>
        <begin position="1"/>
        <end position="186"/>
    </location>
</feature>
<feature type="propeptide" id="PRO_0000363711" description="Removed in mature form" evidence="2">
    <location>
        <begin position="187"/>
        <end position="189"/>
    </location>
</feature>
<feature type="short sequence motif" description="Effector region">
    <location>
        <begin position="32"/>
        <end position="40"/>
    </location>
</feature>
<feature type="binding site" evidence="1">
    <location>
        <begin position="10"/>
        <end position="17"/>
    </location>
    <ligand>
        <name>GTP</name>
        <dbReference type="ChEBI" id="CHEBI:37565"/>
    </ligand>
</feature>
<feature type="binding site" evidence="1">
    <location>
        <begin position="57"/>
        <end position="61"/>
    </location>
    <ligand>
        <name>GTP</name>
        <dbReference type="ChEBI" id="CHEBI:37565"/>
    </ligand>
</feature>
<feature type="binding site" evidence="1">
    <location>
        <begin position="116"/>
        <end position="119"/>
    </location>
    <ligand>
        <name>GTP</name>
        <dbReference type="ChEBI" id="CHEBI:37565"/>
    </ligand>
</feature>
<feature type="modified residue" description="Cysteine methyl ester" evidence="2">
    <location>
        <position position="186"/>
    </location>
</feature>
<feature type="lipid moiety-binding region" description="S-geranylgeranyl cysteine" evidence="2">
    <location>
        <position position="186"/>
    </location>
</feature>
<dbReference type="EC" id="3.6.5.2" evidence="1"/>
<dbReference type="EMBL" id="CH916369">
    <property type="protein sequence ID" value="EDV93579.1"/>
    <property type="molecule type" value="Genomic_DNA"/>
</dbReference>
<dbReference type="SMR" id="B4JFU8"/>
<dbReference type="FunCoup" id="B4JFU8">
    <property type="interactions" value="1171"/>
</dbReference>
<dbReference type="STRING" id="7222.B4JFU8"/>
<dbReference type="EnsemblMetazoa" id="FBtr0154808">
    <property type="protein sequence ID" value="FBpp0153300"/>
    <property type="gene ID" value="FBgn0126859"/>
</dbReference>
<dbReference type="EnsemblMetazoa" id="FBtr0452533">
    <property type="protein sequence ID" value="FBpp0403220"/>
    <property type="gene ID" value="FBgn0126859"/>
</dbReference>
<dbReference type="EnsemblMetazoa" id="FBtr0455586">
    <property type="protein sequence ID" value="FBpp0406167"/>
    <property type="gene ID" value="FBgn0126859"/>
</dbReference>
<dbReference type="EnsemblMetazoa" id="FBtr0467392">
    <property type="protein sequence ID" value="FBpp0417556"/>
    <property type="gene ID" value="FBgn0126859"/>
</dbReference>
<dbReference type="EnsemblMetazoa" id="XM_001990481.2">
    <property type="protein sequence ID" value="XP_001990517.1"/>
    <property type="gene ID" value="LOC6563010"/>
</dbReference>
<dbReference type="EnsemblMetazoa" id="XM_032737006.2">
    <property type="protein sequence ID" value="XP_032592897.1"/>
    <property type="gene ID" value="LOC6563010"/>
</dbReference>
<dbReference type="EnsemblMetazoa" id="XM_032737007.2">
    <property type="protein sequence ID" value="XP_032592898.1"/>
    <property type="gene ID" value="LOC6563010"/>
</dbReference>
<dbReference type="EnsemblMetazoa" id="XM_032737008.2">
    <property type="protein sequence ID" value="XP_032592899.1"/>
    <property type="gene ID" value="LOC6563010"/>
</dbReference>
<dbReference type="GeneID" id="6563010"/>
<dbReference type="KEGG" id="dgr:6563010"/>
<dbReference type="CTD" id="41140"/>
<dbReference type="eggNOG" id="KOG0395">
    <property type="taxonomic scope" value="Eukaryota"/>
</dbReference>
<dbReference type="HOGENOM" id="CLU_041217_9_8_1"/>
<dbReference type="InParanoid" id="B4JFU8"/>
<dbReference type="OMA" id="CCGGCVI"/>
<dbReference type="OrthoDB" id="5976022at2759"/>
<dbReference type="PhylomeDB" id="B4JFU8"/>
<dbReference type="ChiTaRS" id="Ras85D">
    <property type="organism name" value="fly"/>
</dbReference>
<dbReference type="Proteomes" id="UP000001070">
    <property type="component" value="Unassembled WGS sequence"/>
</dbReference>
<dbReference type="GO" id="GO:0016020">
    <property type="term" value="C:membrane"/>
    <property type="evidence" value="ECO:0000250"/>
    <property type="project" value="UniProtKB"/>
</dbReference>
<dbReference type="GO" id="GO:0005886">
    <property type="term" value="C:plasma membrane"/>
    <property type="evidence" value="ECO:0007669"/>
    <property type="project" value="UniProtKB-SubCell"/>
</dbReference>
<dbReference type="GO" id="GO:0003925">
    <property type="term" value="F:G protein activity"/>
    <property type="evidence" value="ECO:0007669"/>
    <property type="project" value="UniProtKB-EC"/>
</dbReference>
<dbReference type="GO" id="GO:0005525">
    <property type="term" value="F:GTP binding"/>
    <property type="evidence" value="ECO:0007669"/>
    <property type="project" value="UniProtKB-KW"/>
</dbReference>
<dbReference type="GO" id="GO:0007165">
    <property type="term" value="P:signal transduction"/>
    <property type="evidence" value="ECO:0007669"/>
    <property type="project" value="InterPro"/>
</dbReference>
<dbReference type="CDD" id="cd04138">
    <property type="entry name" value="H_N_K_Ras_like"/>
    <property type="match status" value="1"/>
</dbReference>
<dbReference type="FunFam" id="3.40.50.300:FF:000096">
    <property type="entry name" value="KRAS proto-oncogene, GTPase"/>
    <property type="match status" value="1"/>
</dbReference>
<dbReference type="Gene3D" id="3.40.50.300">
    <property type="entry name" value="P-loop containing nucleotide triphosphate hydrolases"/>
    <property type="match status" value="1"/>
</dbReference>
<dbReference type="InterPro" id="IPR027417">
    <property type="entry name" value="P-loop_NTPase"/>
</dbReference>
<dbReference type="InterPro" id="IPR005225">
    <property type="entry name" value="Small_GTP-bd"/>
</dbReference>
<dbReference type="InterPro" id="IPR001806">
    <property type="entry name" value="Small_GTPase"/>
</dbReference>
<dbReference type="InterPro" id="IPR020849">
    <property type="entry name" value="Small_GTPase_Ras-type"/>
</dbReference>
<dbReference type="NCBIfam" id="TIGR00231">
    <property type="entry name" value="small_GTP"/>
    <property type="match status" value="1"/>
</dbReference>
<dbReference type="PANTHER" id="PTHR24070">
    <property type="entry name" value="RAS, DI-RAS, AND RHEB FAMILY MEMBERS OF SMALL GTPASE SUPERFAMILY"/>
    <property type="match status" value="1"/>
</dbReference>
<dbReference type="Pfam" id="PF00071">
    <property type="entry name" value="Ras"/>
    <property type="match status" value="1"/>
</dbReference>
<dbReference type="PRINTS" id="PR00449">
    <property type="entry name" value="RASTRNSFRMNG"/>
</dbReference>
<dbReference type="SMART" id="SM00175">
    <property type="entry name" value="RAB"/>
    <property type="match status" value="1"/>
</dbReference>
<dbReference type="SMART" id="SM00173">
    <property type="entry name" value="RAS"/>
    <property type="match status" value="1"/>
</dbReference>
<dbReference type="SMART" id="SM00174">
    <property type="entry name" value="RHO"/>
    <property type="match status" value="1"/>
</dbReference>
<dbReference type="SUPFAM" id="SSF52540">
    <property type="entry name" value="P-loop containing nucleoside triphosphate hydrolases"/>
    <property type="match status" value="1"/>
</dbReference>
<dbReference type="PROSITE" id="PS51421">
    <property type="entry name" value="RAS"/>
    <property type="match status" value="1"/>
</dbReference>
<accession>B4JFU8</accession>
<evidence type="ECO:0000250" key="1">
    <source>
        <dbReference type="UniProtKB" id="P01112"/>
    </source>
</evidence>
<evidence type="ECO:0000250" key="2">
    <source>
        <dbReference type="UniProtKB" id="P08646"/>
    </source>
</evidence>
<evidence type="ECO:0000255" key="3"/>
<evidence type="ECO:0000312" key="4">
    <source>
        <dbReference type="EMBL" id="EDV93579.1"/>
    </source>
</evidence>
<proteinExistence type="inferred from homology"/>
<sequence length="189" mass="21576">MTEYKLVVVGAGGVGKSALTIQLIQNHFVDEYDPTIEDSYRKQVVIDGETCLLDILDTAGQEEYSAMRDQYMRTGEGFLLVFAVNSAKSFEDIGTYREQIKRVKDAEEVPMVLVGNKCDLPSWNVQNEQAREVAKQYGIPYIETSAKTRMGVDDAFYTLVREIRKDKDNKGRKGRKTNKPNRRFKCKML</sequence>
<keyword id="KW-1003">Cell membrane</keyword>
<keyword id="KW-0342">GTP-binding</keyword>
<keyword id="KW-0378">Hydrolase</keyword>
<keyword id="KW-0449">Lipoprotein</keyword>
<keyword id="KW-0472">Membrane</keyword>
<keyword id="KW-0488">Methylation</keyword>
<keyword id="KW-0547">Nucleotide-binding</keyword>
<keyword id="KW-0636">Prenylation</keyword>
<keyword id="KW-1185">Reference proteome</keyword>
<organism>
    <name type="scientific">Drosophila grimshawi</name>
    <name type="common">Hawaiian fruit fly</name>
    <name type="synonym">Idiomyia grimshawi</name>
    <dbReference type="NCBI Taxonomy" id="7222"/>
    <lineage>
        <taxon>Eukaryota</taxon>
        <taxon>Metazoa</taxon>
        <taxon>Ecdysozoa</taxon>
        <taxon>Arthropoda</taxon>
        <taxon>Hexapoda</taxon>
        <taxon>Insecta</taxon>
        <taxon>Pterygota</taxon>
        <taxon>Neoptera</taxon>
        <taxon>Endopterygota</taxon>
        <taxon>Diptera</taxon>
        <taxon>Brachycera</taxon>
        <taxon>Muscomorpha</taxon>
        <taxon>Ephydroidea</taxon>
        <taxon>Drosophilidae</taxon>
        <taxon>Drosophila</taxon>
        <taxon>Hawaiian Drosophila</taxon>
    </lineage>
</organism>
<name>RAS1_DROGR</name>
<reference evidence="4" key="1">
    <citation type="journal article" date="2007" name="Nature">
        <title>Evolution of genes and genomes on the Drosophila phylogeny.</title>
        <authorList>
            <consortium name="Drosophila 12 genomes consortium"/>
        </authorList>
    </citation>
    <scope>NUCLEOTIDE SEQUENCE [LARGE SCALE GENOMIC DNA]</scope>
    <source>
        <strain evidence="4">Tucson 15287-2541.00</strain>
    </source>
</reference>
<protein>
    <recommendedName>
        <fullName evidence="2">Ras-like protein 1</fullName>
        <ecNumber evidence="1">3.6.5.2</ecNumber>
    </recommendedName>
</protein>